<comment type="function">
    <text evidence="1">Component of the nexin-dynein regulatory complex (N-DRC), a key regulator of ciliary/flagellar motility which maintains the alignment and integrity of the distal axoneme and regulates microtubule sliding in motile axonemes.</text>
</comment>
<comment type="subunit">
    <text evidence="1 2">Component of the nexin-dynein regulatory complex (N-DRC). Interacts with CFAP52 (By similarity).</text>
</comment>
<comment type="interaction">
    <interactant intactId="EBI-23670573">
        <id>Q96DY2-2</id>
    </interactant>
    <interactant intactId="EBI-2554984">
        <id>Q9Y6A5</id>
        <label>TACC3</label>
    </interactant>
    <organismsDiffer>false</organismsDiffer>
    <experiments>3</experiments>
</comment>
<comment type="subcellular location">
    <subcellularLocation>
        <location evidence="1">Cytoplasm</location>
        <location evidence="1">Cytoskeleton</location>
        <location evidence="1">Flagellum axoneme</location>
    </subcellularLocation>
</comment>
<comment type="alternative products">
    <event type="alternative splicing"/>
    <isoform>
        <id>Q96DY2-1</id>
        <name>1</name>
        <sequence type="displayed"/>
    </isoform>
    <isoform>
        <id>Q96DY2-2</id>
        <name>2</name>
        <sequence type="described" ref="VSP_024178"/>
    </isoform>
    <isoform>
        <id>Q96DY2-3</id>
        <name>3</name>
        <sequence type="described" ref="VSP_024179 VSP_024180"/>
    </isoform>
</comment>
<comment type="similarity">
    <text evidence="8">Belongs to the DRC10 family.</text>
</comment>
<dbReference type="EMBL" id="AK127152">
    <property type="protein sequence ID" value="BAC86856.1"/>
    <property type="molecule type" value="mRNA"/>
</dbReference>
<dbReference type="EMBL" id="AC089999">
    <property type="status" value="NOT_ANNOTATED_CDS"/>
    <property type="molecule type" value="Genomic_DNA"/>
</dbReference>
<dbReference type="EMBL" id="BC013151">
    <property type="protein sequence ID" value="AAH13151.1"/>
    <property type="molecule type" value="mRNA"/>
</dbReference>
<dbReference type="CCDS" id="CCDS81743.1">
    <molecule id="Q96DY2-1"/>
</dbReference>
<dbReference type="CCDS" id="CCDS9167.1">
    <molecule id="Q96DY2-2"/>
</dbReference>
<dbReference type="RefSeq" id="NP_001317381.1">
    <molecule id="Q96DY2-1"/>
    <property type="nucleotide sequence ID" value="NM_001330452.2"/>
</dbReference>
<dbReference type="RefSeq" id="NP_612460.1">
    <molecule id="Q96DY2-2"/>
    <property type="nucleotide sequence ID" value="NM_138451.3"/>
</dbReference>
<dbReference type="RefSeq" id="XP_005253890.1">
    <molecule id="Q96DY2-1"/>
    <property type="nucleotide sequence ID" value="XM_005253833.5"/>
</dbReference>
<dbReference type="RefSeq" id="XP_011536164.1">
    <property type="nucleotide sequence ID" value="XM_011537862.2"/>
</dbReference>
<dbReference type="RefSeq" id="XP_011536165.1">
    <property type="nucleotide sequence ID" value="XM_011537863.2"/>
</dbReference>
<dbReference type="RefSeq" id="XP_047284219.1">
    <molecule id="Q96DY2-2"/>
    <property type="nucleotide sequence ID" value="XM_047428263.1"/>
</dbReference>
<dbReference type="RefSeq" id="XP_054226999.1">
    <molecule id="Q96DY2-1"/>
    <property type="nucleotide sequence ID" value="XM_054371024.1"/>
</dbReference>
<dbReference type="RefSeq" id="XP_054227002.1">
    <molecule id="Q96DY2-2"/>
    <property type="nucleotide sequence ID" value="XM_054371027.1"/>
</dbReference>
<dbReference type="PDB" id="8J07">
    <property type="method" value="EM"/>
    <property type="resolution" value="4.10 A"/>
    <property type="chains" value="10=1-449"/>
</dbReference>
<dbReference type="PDBsum" id="8J07"/>
<dbReference type="EMDB" id="EMD-35888"/>
<dbReference type="SMR" id="Q96DY2"/>
<dbReference type="BioGRID" id="125456">
    <property type="interactions" value="6"/>
</dbReference>
<dbReference type="ComplexPortal" id="CPX-8086">
    <property type="entry name" value="Nexin-dynein regulatory complex"/>
</dbReference>
<dbReference type="FunCoup" id="Q96DY2">
    <property type="interactions" value="85"/>
</dbReference>
<dbReference type="IntAct" id="Q96DY2">
    <property type="interactions" value="3"/>
</dbReference>
<dbReference type="STRING" id="9606.ENSP00000400669"/>
<dbReference type="GlyGen" id="Q96DY2">
    <property type="glycosylation" value="1 site, 1 O-linked glycan (1 site)"/>
</dbReference>
<dbReference type="iPTMnet" id="Q96DY2"/>
<dbReference type="PhosphoSitePlus" id="Q96DY2"/>
<dbReference type="BioMuta" id="IQCD"/>
<dbReference type="DMDM" id="143340095"/>
<dbReference type="MassIVE" id="Q96DY2"/>
<dbReference type="PeptideAtlas" id="Q96DY2"/>
<dbReference type="ProteomicsDB" id="76339">
    <molecule id="Q96DY2-1"/>
</dbReference>
<dbReference type="ProteomicsDB" id="76340">
    <molecule id="Q96DY2-2"/>
</dbReference>
<dbReference type="ProteomicsDB" id="76341">
    <molecule id="Q96DY2-3"/>
</dbReference>
<dbReference type="Antibodypedia" id="31238">
    <property type="antibodies" value="87 antibodies from 16 providers"/>
</dbReference>
<dbReference type="DNASU" id="115811"/>
<dbReference type="Ensembl" id="ENST00000299732.6">
    <molecule id="Q96DY2-2"/>
    <property type="protein sequence ID" value="ENSP00000299732.2"/>
    <property type="gene ID" value="ENSG00000166578.10"/>
</dbReference>
<dbReference type="Ensembl" id="ENST00000416617.3">
    <molecule id="Q96DY2-1"/>
    <property type="protein sequence ID" value="ENSP00000400669.2"/>
    <property type="gene ID" value="ENSG00000166578.10"/>
</dbReference>
<dbReference type="GeneID" id="115811"/>
<dbReference type="KEGG" id="hsa:115811"/>
<dbReference type="MANE-Select" id="ENST00000416617.3">
    <property type="protein sequence ID" value="ENSP00000400669.2"/>
    <property type="RefSeq nucleotide sequence ID" value="NM_001330452.2"/>
    <property type="RefSeq protein sequence ID" value="NP_001317381.1"/>
</dbReference>
<dbReference type="UCSC" id="uc001tuu.4">
    <molecule id="Q96DY2-1"/>
    <property type="organism name" value="human"/>
</dbReference>
<dbReference type="AGR" id="HGNC:25168"/>
<dbReference type="CTD" id="115811"/>
<dbReference type="GeneCards" id="IQCD"/>
<dbReference type="HGNC" id="HGNC:25168">
    <property type="gene designation" value="IQCD"/>
</dbReference>
<dbReference type="HPA" id="ENSG00000166578">
    <property type="expression patterns" value="Group enriched (choroid plexus, fallopian tube, testis)"/>
</dbReference>
<dbReference type="neXtProt" id="NX_Q96DY2"/>
<dbReference type="OpenTargets" id="ENSG00000166578"/>
<dbReference type="PharmGKB" id="PA134901058"/>
<dbReference type="VEuPathDB" id="HostDB:ENSG00000166578"/>
<dbReference type="eggNOG" id="ENOG502QQS9">
    <property type="taxonomic scope" value="Eukaryota"/>
</dbReference>
<dbReference type="GeneTree" id="ENSGT00730000111354"/>
<dbReference type="HOGENOM" id="CLU_637710_0_0_1"/>
<dbReference type="InParanoid" id="Q96DY2"/>
<dbReference type="OMA" id="AKIQKYW"/>
<dbReference type="OrthoDB" id="536093at2759"/>
<dbReference type="PAN-GO" id="Q96DY2">
    <property type="GO annotations" value="0 GO annotations based on evolutionary models"/>
</dbReference>
<dbReference type="PhylomeDB" id="Q96DY2"/>
<dbReference type="TreeFam" id="TF326203"/>
<dbReference type="PathwayCommons" id="Q96DY2"/>
<dbReference type="SignaLink" id="Q96DY2"/>
<dbReference type="BioGRID-ORCS" id="115811">
    <property type="hits" value="15 hits in 1143 CRISPR screens"/>
</dbReference>
<dbReference type="ChiTaRS" id="IQCD">
    <property type="organism name" value="human"/>
</dbReference>
<dbReference type="GenomeRNAi" id="115811"/>
<dbReference type="Pharos" id="Q96DY2">
    <property type="development level" value="Tbio"/>
</dbReference>
<dbReference type="PRO" id="PR:Q96DY2"/>
<dbReference type="Proteomes" id="UP000005640">
    <property type="component" value="Chromosome 12"/>
</dbReference>
<dbReference type="RNAct" id="Q96DY2">
    <property type="molecule type" value="protein"/>
</dbReference>
<dbReference type="Bgee" id="ENSG00000166578">
    <property type="expression patterns" value="Expressed in left testis and 106 other cell types or tissues"/>
</dbReference>
<dbReference type="ExpressionAtlas" id="Q96DY2">
    <property type="expression patterns" value="baseline and differential"/>
</dbReference>
<dbReference type="GO" id="GO:0036064">
    <property type="term" value="C:ciliary basal body"/>
    <property type="evidence" value="ECO:0000314"/>
    <property type="project" value="GO_Central"/>
</dbReference>
<dbReference type="GO" id="GO:0005737">
    <property type="term" value="C:cytoplasm"/>
    <property type="evidence" value="ECO:0007669"/>
    <property type="project" value="UniProtKB-KW"/>
</dbReference>
<dbReference type="GO" id="GO:0031514">
    <property type="term" value="C:motile cilium"/>
    <property type="evidence" value="ECO:0007669"/>
    <property type="project" value="UniProtKB-KW"/>
</dbReference>
<dbReference type="CDD" id="cd23767">
    <property type="entry name" value="IQCD"/>
    <property type="match status" value="1"/>
</dbReference>
<dbReference type="Gene3D" id="1.20.5.190">
    <property type="match status" value="1"/>
</dbReference>
<dbReference type="InterPro" id="IPR042815">
    <property type="entry name" value="DRC10"/>
</dbReference>
<dbReference type="InterPro" id="IPR000048">
    <property type="entry name" value="IQ_motif_EF-hand-BS"/>
</dbReference>
<dbReference type="PANTHER" id="PTHR31598:SF1">
    <property type="entry name" value="DYNEIN REGULATORY COMPLEX PROTEIN 10"/>
    <property type="match status" value="1"/>
</dbReference>
<dbReference type="PANTHER" id="PTHR31598">
    <property type="entry name" value="IQ DOMAIN-CONTAINING PROTEIN D"/>
    <property type="match status" value="1"/>
</dbReference>
<dbReference type="Pfam" id="PF00612">
    <property type="entry name" value="IQ"/>
    <property type="match status" value="1"/>
</dbReference>
<dbReference type="SMART" id="SM00015">
    <property type="entry name" value="IQ"/>
    <property type="match status" value="1"/>
</dbReference>
<dbReference type="PROSITE" id="PS50096">
    <property type="entry name" value="IQ"/>
    <property type="match status" value="1"/>
</dbReference>
<feature type="chain" id="PRO_0000282548" description="Dynein regulatory complex protein 10">
    <location>
        <begin position="1"/>
        <end position="449"/>
    </location>
</feature>
<feature type="domain" description="IQ" evidence="4">
    <location>
        <begin position="400"/>
        <end position="429"/>
    </location>
</feature>
<feature type="region of interest" description="Disordered" evidence="5">
    <location>
        <begin position="422"/>
        <end position="449"/>
    </location>
</feature>
<feature type="coiled-coil region" evidence="3">
    <location>
        <begin position="90"/>
        <end position="125"/>
    </location>
</feature>
<feature type="compositionally biased region" description="Basic and acidic residues" evidence="5">
    <location>
        <begin position="430"/>
        <end position="449"/>
    </location>
</feature>
<feature type="splice variant" id="VSP_024178" description="In isoform 2." evidence="7">
    <location>
        <begin position="244"/>
        <end position="345"/>
    </location>
</feature>
<feature type="splice variant" id="VSP_024179" description="In isoform 3." evidence="6">
    <original>VEKENFVIQELKNHLHQVLKFSENSLVRTKQEAEKQQKADFRASQARVAKIQQEILQLQSQFYNLVMENREAEQALRKKKYKVE</original>
    <variation>VLFHSIAEITEEATQIFCWLGFSSMIDFFFKMESRSVVQTRVQWCNLDSLQPLPPRFKRFSHHSLPSSWDYRRMPPRPANFLYF</variation>
    <location>
        <begin position="244"/>
        <end position="327"/>
    </location>
</feature>
<feature type="splice variant" id="VSP_024180" description="In isoform 3." evidence="6">
    <location>
        <begin position="328"/>
        <end position="449"/>
    </location>
</feature>
<feature type="sequence variant" id="VAR_056921" description="In dbSNP:rs7966313.">
    <original>L</original>
    <variation>V</variation>
    <location>
        <position position="136"/>
    </location>
</feature>
<protein>
    <recommendedName>
        <fullName evidence="1">Dynein regulatory complex protein 10</fullName>
    </recommendedName>
    <alternativeName>
        <fullName>IQ domain-containing protein D</fullName>
    </alternativeName>
</protein>
<sequence length="449" mass="52359">MALDILAMAPLYQAPAINRIGPKTDPSKRPADPLKPLVLSRTKLTTIEAKRIMSILDEAIYKVELVTLLSYVASNREDMEGMLGEDVMRAVREHEDLCQVLLENVRCLKEKERQLQEQKEAEEEGWLRDRLLSIELQKSSLSPLMQQIKDSTKNVLRLLLSNPQAARLLQMQTQGRSAEAQNFIDSLIELRGFLFEKLLTSPMEARDKAQFLQDISRQNSNNQQIIDTLEKELAERMKNRNAEVEKENFVIQELKNHLHQVLKFSENSLVRTKQEAEKQQKADFRASQARVAKIQQEILQLQSQFYNLVMENREAEQALRKKKYKVETEIENWIQKYDTEMGEKQEELEDLDAVHREEKISLEELRRRHKVLVGEFAQIREEREINSKKRMEAEQEMVRMVRAATLIQALWKGYLVRSLLRSKKKRGKGKAKDKEKGKQKGKEKGKGKK</sequence>
<evidence type="ECO:0000250" key="1">
    <source>
        <dbReference type="UniProtKB" id="A8J0N6"/>
    </source>
</evidence>
<evidence type="ECO:0000250" key="2">
    <source>
        <dbReference type="UniProtKB" id="F1RKB1"/>
    </source>
</evidence>
<evidence type="ECO:0000255" key="3"/>
<evidence type="ECO:0000255" key="4">
    <source>
        <dbReference type="PROSITE-ProRule" id="PRU00116"/>
    </source>
</evidence>
<evidence type="ECO:0000256" key="5">
    <source>
        <dbReference type="SAM" id="MobiDB-lite"/>
    </source>
</evidence>
<evidence type="ECO:0000303" key="6">
    <source>
    </source>
</evidence>
<evidence type="ECO:0000303" key="7">
    <source>
    </source>
</evidence>
<evidence type="ECO:0000305" key="8"/>
<organism>
    <name type="scientific">Homo sapiens</name>
    <name type="common">Human</name>
    <dbReference type="NCBI Taxonomy" id="9606"/>
    <lineage>
        <taxon>Eukaryota</taxon>
        <taxon>Metazoa</taxon>
        <taxon>Chordata</taxon>
        <taxon>Craniata</taxon>
        <taxon>Vertebrata</taxon>
        <taxon>Euteleostomi</taxon>
        <taxon>Mammalia</taxon>
        <taxon>Eutheria</taxon>
        <taxon>Euarchontoglires</taxon>
        <taxon>Primates</taxon>
        <taxon>Haplorrhini</taxon>
        <taxon>Catarrhini</taxon>
        <taxon>Hominidae</taxon>
        <taxon>Homo</taxon>
    </lineage>
</organism>
<name>DRC10_HUMAN</name>
<proteinExistence type="evidence at protein level"/>
<reference key="1">
    <citation type="journal article" date="2004" name="Nat. Genet.">
        <title>Complete sequencing and characterization of 21,243 full-length human cDNAs.</title>
        <authorList>
            <person name="Ota T."/>
            <person name="Suzuki Y."/>
            <person name="Nishikawa T."/>
            <person name="Otsuki T."/>
            <person name="Sugiyama T."/>
            <person name="Irie R."/>
            <person name="Wakamatsu A."/>
            <person name="Hayashi K."/>
            <person name="Sato H."/>
            <person name="Nagai K."/>
            <person name="Kimura K."/>
            <person name="Makita H."/>
            <person name="Sekine M."/>
            <person name="Obayashi M."/>
            <person name="Nishi T."/>
            <person name="Shibahara T."/>
            <person name="Tanaka T."/>
            <person name="Ishii S."/>
            <person name="Yamamoto J."/>
            <person name="Saito K."/>
            <person name="Kawai Y."/>
            <person name="Isono Y."/>
            <person name="Nakamura Y."/>
            <person name="Nagahari K."/>
            <person name="Murakami K."/>
            <person name="Yasuda T."/>
            <person name="Iwayanagi T."/>
            <person name="Wagatsuma M."/>
            <person name="Shiratori A."/>
            <person name="Sudo H."/>
            <person name="Hosoiri T."/>
            <person name="Kaku Y."/>
            <person name="Kodaira H."/>
            <person name="Kondo H."/>
            <person name="Sugawara M."/>
            <person name="Takahashi M."/>
            <person name="Kanda K."/>
            <person name="Yokoi T."/>
            <person name="Furuya T."/>
            <person name="Kikkawa E."/>
            <person name="Omura Y."/>
            <person name="Abe K."/>
            <person name="Kamihara K."/>
            <person name="Katsuta N."/>
            <person name="Sato K."/>
            <person name="Tanikawa M."/>
            <person name="Yamazaki M."/>
            <person name="Ninomiya K."/>
            <person name="Ishibashi T."/>
            <person name="Yamashita H."/>
            <person name="Murakawa K."/>
            <person name="Fujimori K."/>
            <person name="Tanai H."/>
            <person name="Kimata M."/>
            <person name="Watanabe M."/>
            <person name="Hiraoka S."/>
            <person name="Chiba Y."/>
            <person name="Ishida S."/>
            <person name="Ono Y."/>
            <person name="Takiguchi S."/>
            <person name="Watanabe S."/>
            <person name="Yosida M."/>
            <person name="Hotuta T."/>
            <person name="Kusano J."/>
            <person name="Kanehori K."/>
            <person name="Takahashi-Fujii A."/>
            <person name="Hara H."/>
            <person name="Tanase T.-O."/>
            <person name="Nomura Y."/>
            <person name="Togiya S."/>
            <person name="Komai F."/>
            <person name="Hara R."/>
            <person name="Takeuchi K."/>
            <person name="Arita M."/>
            <person name="Imose N."/>
            <person name="Musashino K."/>
            <person name="Yuuki H."/>
            <person name="Oshima A."/>
            <person name="Sasaki N."/>
            <person name="Aotsuka S."/>
            <person name="Yoshikawa Y."/>
            <person name="Matsunawa H."/>
            <person name="Ichihara T."/>
            <person name="Shiohata N."/>
            <person name="Sano S."/>
            <person name="Moriya S."/>
            <person name="Momiyama H."/>
            <person name="Satoh N."/>
            <person name="Takami S."/>
            <person name="Terashima Y."/>
            <person name="Suzuki O."/>
            <person name="Nakagawa S."/>
            <person name="Senoh A."/>
            <person name="Mizoguchi H."/>
            <person name="Goto Y."/>
            <person name="Shimizu F."/>
            <person name="Wakebe H."/>
            <person name="Hishigaki H."/>
            <person name="Watanabe T."/>
            <person name="Sugiyama A."/>
            <person name="Takemoto M."/>
            <person name="Kawakami B."/>
            <person name="Yamazaki M."/>
            <person name="Watanabe K."/>
            <person name="Kumagai A."/>
            <person name="Itakura S."/>
            <person name="Fukuzumi Y."/>
            <person name="Fujimori Y."/>
            <person name="Komiyama M."/>
            <person name="Tashiro H."/>
            <person name="Tanigami A."/>
            <person name="Fujiwara T."/>
            <person name="Ono T."/>
            <person name="Yamada K."/>
            <person name="Fujii Y."/>
            <person name="Ozaki K."/>
            <person name="Hirao M."/>
            <person name="Ohmori Y."/>
            <person name="Kawabata A."/>
            <person name="Hikiji T."/>
            <person name="Kobatake N."/>
            <person name="Inagaki H."/>
            <person name="Ikema Y."/>
            <person name="Okamoto S."/>
            <person name="Okitani R."/>
            <person name="Kawakami T."/>
            <person name="Noguchi S."/>
            <person name="Itoh T."/>
            <person name="Shigeta K."/>
            <person name="Senba T."/>
            <person name="Matsumura K."/>
            <person name="Nakajima Y."/>
            <person name="Mizuno T."/>
            <person name="Morinaga M."/>
            <person name="Sasaki M."/>
            <person name="Togashi T."/>
            <person name="Oyama M."/>
            <person name="Hata H."/>
            <person name="Watanabe M."/>
            <person name="Komatsu T."/>
            <person name="Mizushima-Sugano J."/>
            <person name="Satoh T."/>
            <person name="Shirai Y."/>
            <person name="Takahashi Y."/>
            <person name="Nakagawa K."/>
            <person name="Okumura K."/>
            <person name="Nagase T."/>
            <person name="Nomura N."/>
            <person name="Kikuchi H."/>
            <person name="Masuho Y."/>
            <person name="Yamashita R."/>
            <person name="Nakai K."/>
            <person name="Yada T."/>
            <person name="Nakamura Y."/>
            <person name="Ohara O."/>
            <person name="Isogai T."/>
            <person name="Sugano S."/>
        </authorList>
    </citation>
    <scope>NUCLEOTIDE SEQUENCE [LARGE SCALE MRNA] (ISOFORM 3)</scope>
    <source>
        <tissue>Caudate nucleus</tissue>
    </source>
</reference>
<reference key="2">
    <citation type="journal article" date="2006" name="Nature">
        <title>The finished DNA sequence of human chromosome 12.</title>
        <authorList>
            <person name="Scherer S.E."/>
            <person name="Muzny D.M."/>
            <person name="Buhay C.J."/>
            <person name="Chen R."/>
            <person name="Cree A."/>
            <person name="Ding Y."/>
            <person name="Dugan-Rocha S."/>
            <person name="Gill R."/>
            <person name="Gunaratne P."/>
            <person name="Harris R.A."/>
            <person name="Hawes A.C."/>
            <person name="Hernandez J."/>
            <person name="Hodgson A.V."/>
            <person name="Hume J."/>
            <person name="Jackson A."/>
            <person name="Khan Z.M."/>
            <person name="Kovar-Smith C."/>
            <person name="Lewis L.R."/>
            <person name="Lozado R.J."/>
            <person name="Metzker M.L."/>
            <person name="Milosavljevic A."/>
            <person name="Miner G.R."/>
            <person name="Montgomery K.T."/>
            <person name="Morgan M.B."/>
            <person name="Nazareth L.V."/>
            <person name="Scott G."/>
            <person name="Sodergren E."/>
            <person name="Song X.-Z."/>
            <person name="Steffen D."/>
            <person name="Lovering R.C."/>
            <person name="Wheeler D.A."/>
            <person name="Worley K.C."/>
            <person name="Yuan Y."/>
            <person name="Zhang Z."/>
            <person name="Adams C.Q."/>
            <person name="Ansari-Lari M.A."/>
            <person name="Ayele M."/>
            <person name="Brown M.J."/>
            <person name="Chen G."/>
            <person name="Chen Z."/>
            <person name="Clerc-Blankenburg K.P."/>
            <person name="Davis C."/>
            <person name="Delgado O."/>
            <person name="Dinh H.H."/>
            <person name="Draper H."/>
            <person name="Gonzalez-Garay M.L."/>
            <person name="Havlak P."/>
            <person name="Jackson L.R."/>
            <person name="Jacob L.S."/>
            <person name="Kelly S.H."/>
            <person name="Li L."/>
            <person name="Li Z."/>
            <person name="Liu J."/>
            <person name="Liu W."/>
            <person name="Lu J."/>
            <person name="Maheshwari M."/>
            <person name="Nguyen B.-V."/>
            <person name="Okwuonu G.O."/>
            <person name="Pasternak S."/>
            <person name="Perez L.M."/>
            <person name="Plopper F.J.H."/>
            <person name="Santibanez J."/>
            <person name="Shen H."/>
            <person name="Tabor P.E."/>
            <person name="Verduzco D."/>
            <person name="Waldron L."/>
            <person name="Wang Q."/>
            <person name="Williams G.A."/>
            <person name="Zhang J."/>
            <person name="Zhou J."/>
            <person name="Allen C.C."/>
            <person name="Amin A.G."/>
            <person name="Anyalebechi V."/>
            <person name="Bailey M."/>
            <person name="Barbaria J.A."/>
            <person name="Bimage K.E."/>
            <person name="Bryant N.P."/>
            <person name="Burch P.E."/>
            <person name="Burkett C.E."/>
            <person name="Burrell K.L."/>
            <person name="Calderon E."/>
            <person name="Cardenas V."/>
            <person name="Carter K."/>
            <person name="Casias K."/>
            <person name="Cavazos I."/>
            <person name="Cavazos S.R."/>
            <person name="Ceasar H."/>
            <person name="Chacko J."/>
            <person name="Chan S.N."/>
            <person name="Chavez D."/>
            <person name="Christopoulos C."/>
            <person name="Chu J."/>
            <person name="Cockrell R."/>
            <person name="Cox C.D."/>
            <person name="Dang M."/>
            <person name="Dathorne S.R."/>
            <person name="David R."/>
            <person name="Davis C.M."/>
            <person name="Davy-Carroll L."/>
            <person name="Deshazo D.R."/>
            <person name="Donlin J.E."/>
            <person name="D'Souza L."/>
            <person name="Eaves K.A."/>
            <person name="Egan A."/>
            <person name="Emery-Cohen A.J."/>
            <person name="Escotto M."/>
            <person name="Flagg N."/>
            <person name="Forbes L.D."/>
            <person name="Gabisi A.M."/>
            <person name="Garza M."/>
            <person name="Hamilton C."/>
            <person name="Henderson N."/>
            <person name="Hernandez O."/>
            <person name="Hines S."/>
            <person name="Hogues M.E."/>
            <person name="Huang M."/>
            <person name="Idlebird D.G."/>
            <person name="Johnson R."/>
            <person name="Jolivet A."/>
            <person name="Jones S."/>
            <person name="Kagan R."/>
            <person name="King L.M."/>
            <person name="Leal B."/>
            <person name="Lebow H."/>
            <person name="Lee S."/>
            <person name="LeVan J.M."/>
            <person name="Lewis L.C."/>
            <person name="London P."/>
            <person name="Lorensuhewa L.M."/>
            <person name="Loulseged H."/>
            <person name="Lovett D.A."/>
            <person name="Lucier A."/>
            <person name="Lucier R.L."/>
            <person name="Ma J."/>
            <person name="Madu R.C."/>
            <person name="Mapua P."/>
            <person name="Martindale A.D."/>
            <person name="Martinez E."/>
            <person name="Massey E."/>
            <person name="Mawhiney S."/>
            <person name="Meador M.G."/>
            <person name="Mendez S."/>
            <person name="Mercado C."/>
            <person name="Mercado I.C."/>
            <person name="Merritt C.E."/>
            <person name="Miner Z.L."/>
            <person name="Minja E."/>
            <person name="Mitchell T."/>
            <person name="Mohabbat F."/>
            <person name="Mohabbat K."/>
            <person name="Montgomery B."/>
            <person name="Moore N."/>
            <person name="Morris S."/>
            <person name="Munidasa M."/>
            <person name="Ngo R.N."/>
            <person name="Nguyen N.B."/>
            <person name="Nickerson E."/>
            <person name="Nwaokelemeh O.O."/>
            <person name="Nwokenkwo S."/>
            <person name="Obregon M."/>
            <person name="Oguh M."/>
            <person name="Oragunye N."/>
            <person name="Oviedo R.J."/>
            <person name="Parish B.J."/>
            <person name="Parker D.N."/>
            <person name="Parrish J."/>
            <person name="Parks K.L."/>
            <person name="Paul H.A."/>
            <person name="Payton B.A."/>
            <person name="Perez A."/>
            <person name="Perrin W."/>
            <person name="Pickens A."/>
            <person name="Primus E.L."/>
            <person name="Pu L.-L."/>
            <person name="Puazo M."/>
            <person name="Quiles M.M."/>
            <person name="Quiroz J.B."/>
            <person name="Rabata D."/>
            <person name="Reeves K."/>
            <person name="Ruiz S.J."/>
            <person name="Shao H."/>
            <person name="Sisson I."/>
            <person name="Sonaike T."/>
            <person name="Sorelle R.P."/>
            <person name="Sutton A.E."/>
            <person name="Svatek A.F."/>
            <person name="Svetz L.A."/>
            <person name="Tamerisa K.S."/>
            <person name="Taylor T.R."/>
            <person name="Teague B."/>
            <person name="Thomas N."/>
            <person name="Thorn R.D."/>
            <person name="Trejos Z.Y."/>
            <person name="Trevino B.K."/>
            <person name="Ukegbu O.N."/>
            <person name="Urban J.B."/>
            <person name="Vasquez L.I."/>
            <person name="Vera V.A."/>
            <person name="Villasana D.M."/>
            <person name="Wang L."/>
            <person name="Ward-Moore S."/>
            <person name="Warren J.T."/>
            <person name="Wei X."/>
            <person name="White F."/>
            <person name="Williamson A.L."/>
            <person name="Wleczyk R."/>
            <person name="Wooden H.S."/>
            <person name="Wooden S.H."/>
            <person name="Yen J."/>
            <person name="Yoon L."/>
            <person name="Yoon V."/>
            <person name="Zorrilla S.E."/>
            <person name="Nelson D."/>
            <person name="Kucherlapati R."/>
            <person name="Weinstock G."/>
            <person name="Gibbs R.A."/>
        </authorList>
    </citation>
    <scope>NUCLEOTIDE SEQUENCE [LARGE SCALE GENOMIC DNA]</scope>
</reference>
<reference key="3">
    <citation type="journal article" date="2004" name="Genome Res.">
        <title>The status, quality, and expansion of the NIH full-length cDNA project: the Mammalian Gene Collection (MGC).</title>
        <authorList>
            <consortium name="The MGC Project Team"/>
        </authorList>
    </citation>
    <scope>NUCLEOTIDE SEQUENCE [LARGE SCALE MRNA] (ISOFORM 2)</scope>
    <source>
        <tissue>Lymph</tissue>
    </source>
</reference>
<gene>
    <name type="primary">IQCD</name>
    <name evidence="1" type="synonym">DRC10</name>
</gene>
<keyword id="KW-0002">3D-structure</keyword>
<keyword id="KW-0025">Alternative splicing</keyword>
<keyword id="KW-0966">Cell projection</keyword>
<keyword id="KW-0969">Cilium</keyword>
<keyword id="KW-0175">Coiled coil</keyword>
<keyword id="KW-0963">Cytoplasm</keyword>
<keyword id="KW-0206">Cytoskeleton</keyword>
<keyword id="KW-0282">Flagellum</keyword>
<keyword id="KW-1267">Proteomics identification</keyword>
<keyword id="KW-1185">Reference proteome</keyword>
<accession>Q96DY2</accession>
<accession>Q6ZSU0</accession>